<protein>
    <recommendedName>
        <fullName evidence="1">UPF0299 membrane protein ECA2828</fullName>
    </recommendedName>
</protein>
<accession>Q6D3B6</accession>
<sequence>MRNTFIVCWQYLRAFALIYLCLLAGNAVSALLPFTIPGSIIGMLVLFTLLASQILPAQWVKPGCYLLIRHMALLFVPIGVGVMNYYDLVNQQFGPIVVSCLISTFIVMLVVGFSTQIMQRERATAGDRTPPKDNE</sequence>
<proteinExistence type="inferred from homology"/>
<name>Y2828_PECAS</name>
<reference key="1">
    <citation type="journal article" date="2004" name="Proc. Natl. Acad. Sci. U.S.A.">
        <title>Genome sequence of the enterobacterial phytopathogen Erwinia carotovora subsp. atroseptica and characterization of virulence factors.</title>
        <authorList>
            <person name="Bell K.S."/>
            <person name="Sebaihia M."/>
            <person name="Pritchard L."/>
            <person name="Holden M.T.G."/>
            <person name="Hyman L.J."/>
            <person name="Holeva M.C."/>
            <person name="Thomson N.R."/>
            <person name="Bentley S.D."/>
            <person name="Churcher L.J.C."/>
            <person name="Mungall K."/>
            <person name="Atkin R."/>
            <person name="Bason N."/>
            <person name="Brooks K."/>
            <person name="Chillingworth T."/>
            <person name="Clark K."/>
            <person name="Doggett J."/>
            <person name="Fraser A."/>
            <person name="Hance Z."/>
            <person name="Hauser H."/>
            <person name="Jagels K."/>
            <person name="Moule S."/>
            <person name="Norbertczak H."/>
            <person name="Ormond D."/>
            <person name="Price C."/>
            <person name="Quail M.A."/>
            <person name="Sanders M."/>
            <person name="Walker D."/>
            <person name="Whitehead S."/>
            <person name="Salmond G.P.C."/>
            <person name="Birch P.R.J."/>
            <person name="Parkhill J."/>
            <person name="Toth I.K."/>
        </authorList>
    </citation>
    <scope>NUCLEOTIDE SEQUENCE [LARGE SCALE GENOMIC DNA]</scope>
    <source>
        <strain>SCRI 1043 / ATCC BAA-672</strain>
    </source>
</reference>
<organism>
    <name type="scientific">Pectobacterium atrosepticum (strain SCRI 1043 / ATCC BAA-672)</name>
    <name type="common">Erwinia carotovora subsp. atroseptica</name>
    <dbReference type="NCBI Taxonomy" id="218491"/>
    <lineage>
        <taxon>Bacteria</taxon>
        <taxon>Pseudomonadati</taxon>
        <taxon>Pseudomonadota</taxon>
        <taxon>Gammaproteobacteria</taxon>
        <taxon>Enterobacterales</taxon>
        <taxon>Pectobacteriaceae</taxon>
        <taxon>Pectobacterium</taxon>
    </lineage>
</organism>
<gene>
    <name type="ordered locus">ECA2828</name>
</gene>
<keyword id="KW-0997">Cell inner membrane</keyword>
<keyword id="KW-1003">Cell membrane</keyword>
<keyword id="KW-0472">Membrane</keyword>
<keyword id="KW-1185">Reference proteome</keyword>
<keyword id="KW-0812">Transmembrane</keyword>
<keyword id="KW-1133">Transmembrane helix</keyword>
<feature type="chain" id="PRO_1000137363" description="UPF0299 membrane protein ECA2828">
    <location>
        <begin position="1"/>
        <end position="135"/>
    </location>
</feature>
<feature type="transmembrane region" description="Helical" evidence="1">
    <location>
        <begin position="5"/>
        <end position="25"/>
    </location>
</feature>
<feature type="transmembrane region" description="Helical" evidence="1">
    <location>
        <begin position="30"/>
        <end position="50"/>
    </location>
</feature>
<feature type="transmembrane region" description="Helical" evidence="1">
    <location>
        <begin position="63"/>
        <end position="83"/>
    </location>
</feature>
<feature type="transmembrane region" description="Helical" evidence="1">
    <location>
        <begin position="93"/>
        <end position="113"/>
    </location>
</feature>
<dbReference type="EMBL" id="BX950851">
    <property type="protein sequence ID" value="CAG75728.1"/>
    <property type="molecule type" value="Genomic_DNA"/>
</dbReference>
<dbReference type="RefSeq" id="WP_011094362.1">
    <property type="nucleotide sequence ID" value="NC_004547.2"/>
</dbReference>
<dbReference type="SMR" id="Q6D3B6"/>
<dbReference type="STRING" id="218491.ECA2828"/>
<dbReference type="KEGG" id="eca:ECA2828"/>
<dbReference type="PATRIC" id="fig|218491.5.peg.2869"/>
<dbReference type="eggNOG" id="COG1380">
    <property type="taxonomic scope" value="Bacteria"/>
</dbReference>
<dbReference type="HOGENOM" id="CLU_113736_1_1_6"/>
<dbReference type="OrthoDB" id="385012at2"/>
<dbReference type="Proteomes" id="UP000007966">
    <property type="component" value="Chromosome"/>
</dbReference>
<dbReference type="GO" id="GO:0005886">
    <property type="term" value="C:plasma membrane"/>
    <property type="evidence" value="ECO:0007669"/>
    <property type="project" value="UniProtKB-SubCell"/>
</dbReference>
<dbReference type="HAMAP" id="MF_01144">
    <property type="entry name" value="UPF0299"/>
    <property type="match status" value="1"/>
</dbReference>
<dbReference type="InterPro" id="IPR005538">
    <property type="entry name" value="LrgA/CidA"/>
</dbReference>
<dbReference type="InterPro" id="IPR022957">
    <property type="entry name" value="Uncharacterised_UPF0299"/>
</dbReference>
<dbReference type="NCBIfam" id="NF002494">
    <property type="entry name" value="PRK01821.1"/>
    <property type="match status" value="1"/>
</dbReference>
<dbReference type="PANTHER" id="PTHR33931">
    <property type="entry name" value="HOLIN-LIKE PROTEIN CIDA-RELATED"/>
    <property type="match status" value="1"/>
</dbReference>
<dbReference type="PANTHER" id="PTHR33931:SF5">
    <property type="entry name" value="UPF0299 MEMBRANE PROTEIN YOHJ"/>
    <property type="match status" value="1"/>
</dbReference>
<dbReference type="Pfam" id="PF03788">
    <property type="entry name" value="LrgA"/>
    <property type="match status" value="1"/>
</dbReference>
<comment type="subcellular location">
    <subcellularLocation>
        <location evidence="1">Cell inner membrane</location>
        <topology evidence="1">Multi-pass membrane protein</topology>
    </subcellularLocation>
</comment>
<comment type="similarity">
    <text evidence="1">Belongs to the UPF0299 family.</text>
</comment>
<evidence type="ECO:0000255" key="1">
    <source>
        <dbReference type="HAMAP-Rule" id="MF_01144"/>
    </source>
</evidence>